<sequence length="806" mass="93070">MDPNNKVSINKNMGLLRKCLCHDEYNKKRFCYSRFHHKTLLYKQLYEISKILRRLNSGLDMWCLRDAIISALGAMHDAPHVDRLLGQFYLKTNSASEFDSISLILESENILQKELIEFVRDSKVELEKILQAAIHVWRAKFSPGVLAASRFLDEISNSFNGIEENIPTIFLRISVTLASQIKKIEYLQKSFVSHKCPLVEEILILLYKRVCMLPFPCMSNLGLVSEKKSVFDTVFHNVSNFSLEDFLDINSGFFLPAMLNGSYVSVNLTRYHYEAESLMELLLSQLQIVEKDTNKTTGLTIYLEIWHLSLLMWLDFCEILPTTVQVKFCLILPEIFMERLKTENSYWSVFHKALAINLGLYDESDFTSKYLECERTAEHARIKTETLLDNICRCLRRGQMGFIFRKNIHKYSMLPQIASYCLGNSMDVIPFEYGLNTAFRIALNLSYFVENVSEEQKSHTNIDMFHYRDKIFNLKKMRKTVTELVLIGNAVIDYALENRDFLMDGIVNARSLAICVTGLHSALMSMNLPFNSQLGCQLYRIVCENIYYSSVRTSMNCCKKGAEPCSFFQRSKYAQGILHCDLYDNVEYTLPNVLWTNLRSDIKKYGLRNLTFVSGSAMSKEFDLLNCSQSFCPIEGNKILKRSSIKVLHPNPVFHSDLSVYSTELQTLYIPVYNGLFLNRFKNHLEYLSSVNYDVSKVNKNLFSEEEMQEMTIFLNAFDYSVNEMLNMYVGALPFTDHGQANVFFINKTENMRDILVCLYQNGFKTGIYQAVYKNQKCDGVNPSKKFDLLSGFSDGVVMSTMHVFQ</sequence>
<dbReference type="EMBL" id="U43400">
    <property type="protein sequence ID" value="AAC54690.1"/>
    <property type="molecule type" value="Genomic_DNA"/>
</dbReference>
<dbReference type="PIR" id="T41930">
    <property type="entry name" value="T41930"/>
</dbReference>
<dbReference type="RefSeq" id="YP_073768.1">
    <property type="nucleotide sequence ID" value="NC_001716.2"/>
</dbReference>
<dbReference type="SMR" id="P50641"/>
<dbReference type="DNASU" id="3289486"/>
<dbReference type="GeneID" id="3289486"/>
<dbReference type="KEGG" id="vg:3289486"/>
<dbReference type="Proteomes" id="UP000009246">
    <property type="component" value="Segment"/>
</dbReference>
<dbReference type="GO" id="GO:0030430">
    <property type="term" value="C:host cell cytoplasm"/>
    <property type="evidence" value="ECO:0007669"/>
    <property type="project" value="UniProtKB-SubCell"/>
</dbReference>
<dbReference type="GO" id="GO:0044423">
    <property type="term" value="C:virion component"/>
    <property type="evidence" value="ECO:0007669"/>
    <property type="project" value="UniProtKB-UniRule"/>
</dbReference>
<dbReference type="GO" id="GO:0005524">
    <property type="term" value="F:ATP binding"/>
    <property type="evidence" value="ECO:0007669"/>
    <property type="project" value="InterPro"/>
</dbReference>
<dbReference type="GO" id="GO:0004748">
    <property type="term" value="F:ribonucleoside-diphosphate reductase activity, thioredoxin disulfide as acceptor"/>
    <property type="evidence" value="ECO:0007669"/>
    <property type="project" value="InterPro"/>
</dbReference>
<dbReference type="GO" id="GO:0009263">
    <property type="term" value="P:deoxyribonucleotide biosynthetic process"/>
    <property type="evidence" value="ECO:0007669"/>
    <property type="project" value="InterPro"/>
</dbReference>
<dbReference type="Gene3D" id="3.20.70.20">
    <property type="match status" value="1"/>
</dbReference>
<dbReference type="HAMAP" id="MF_04027">
    <property type="entry name" value="HSV_RIR1_betahv"/>
    <property type="match status" value="1"/>
</dbReference>
<dbReference type="InterPro" id="IPR034716">
    <property type="entry name" value="HSV_RIR1_betahv"/>
</dbReference>
<dbReference type="InterPro" id="IPR013346">
    <property type="entry name" value="NrdE_NrdA_C"/>
</dbReference>
<dbReference type="InterPro" id="IPR000788">
    <property type="entry name" value="RNR_lg_C"/>
</dbReference>
<dbReference type="InterPro" id="IPR013509">
    <property type="entry name" value="RNR_lsu_N"/>
</dbReference>
<dbReference type="InterPro" id="IPR039718">
    <property type="entry name" value="Rrm1"/>
</dbReference>
<dbReference type="PANTHER" id="PTHR11573">
    <property type="entry name" value="RIBONUCLEOSIDE-DIPHOSPHATE REDUCTASE LARGE CHAIN"/>
    <property type="match status" value="1"/>
</dbReference>
<dbReference type="PANTHER" id="PTHR11573:SF6">
    <property type="entry name" value="RIBONUCLEOSIDE-DIPHOSPHATE REDUCTASE LARGE SUBUNIT"/>
    <property type="match status" value="1"/>
</dbReference>
<dbReference type="Pfam" id="PF02867">
    <property type="entry name" value="Ribonuc_red_lgC"/>
    <property type="match status" value="1"/>
</dbReference>
<dbReference type="Pfam" id="PF00317">
    <property type="entry name" value="Ribonuc_red_lgN"/>
    <property type="match status" value="1"/>
</dbReference>
<dbReference type="PRINTS" id="PR01183">
    <property type="entry name" value="RIBORDTASEM1"/>
</dbReference>
<dbReference type="SUPFAM" id="SSF51998">
    <property type="entry name" value="PFL-like glycyl radical enzymes"/>
    <property type="match status" value="1"/>
</dbReference>
<dbReference type="PROSITE" id="PS00089">
    <property type="entry name" value="RIBORED_LARGE"/>
    <property type="match status" value="1"/>
</dbReference>
<reference key="1">
    <citation type="journal article" date="1996" name="J. Virol.">
        <title>Determination and analysis of the complete nucleotide sequence of human herpesvirus.</title>
        <authorList>
            <person name="Nicholas J."/>
        </authorList>
    </citation>
    <scope>NUCLEOTIDE SEQUENCE [LARGE SCALE GENOMIC DNA]</scope>
</reference>
<reference key="2">
    <citation type="journal article" date="1999" name="J. Gen. Virol.">
        <title>The U28 ORF of human herpesvirus-7 does not encode a functional ribonucleotide reductase R1 subunit.</title>
        <authorList>
            <person name="Sun Y."/>
            <person name="Conner J."/>
        </authorList>
    </citation>
    <scope>LACK OF RIBONUCLEOTIDE REDUCTASE ACTIVITY</scope>
</reference>
<reference key="3">
    <citation type="journal article" date="2009" name="Trends Biochem. Sci.">
        <title>Tinkering with a viral ribonucleotide reductase.</title>
        <authorList>
            <person name="Lembo D."/>
            <person name="Brune W."/>
        </authorList>
    </citation>
    <scope>REVIEW</scope>
</reference>
<organism>
    <name type="scientific">Human herpesvirus 7 (strain JI)</name>
    <name type="common">HHV-7</name>
    <name type="synonym">Human T lymphotropic virus</name>
    <dbReference type="NCBI Taxonomy" id="57278"/>
    <lineage>
        <taxon>Viruses</taxon>
        <taxon>Duplodnaviria</taxon>
        <taxon>Heunggongvirae</taxon>
        <taxon>Peploviricota</taxon>
        <taxon>Herviviricetes</taxon>
        <taxon>Herpesvirales</taxon>
        <taxon>Orthoherpesviridae</taxon>
        <taxon>Betaherpesvirinae</taxon>
        <taxon>Roseolovirus</taxon>
        <taxon>Roseolovirus humanbeta7</taxon>
        <taxon>Human betaherpesvirus 7</taxon>
    </lineage>
</organism>
<gene>
    <name evidence="1" type="primary">RIR1</name>
    <name type="synonym">U28</name>
</gene>
<comment type="function">
    <text evidence="1">Does not possess a ribonucleotide reductase activity. Betaherpesviruses probably use another strategy to expand the dNTP pool in a quiescent host cell.</text>
</comment>
<comment type="subcellular location">
    <subcellularLocation>
        <location evidence="1">Virion</location>
    </subcellularLocation>
    <subcellularLocation>
        <location evidence="1">Host cytoplasm</location>
    </subcellularLocation>
</comment>
<comment type="similarity">
    <text evidence="1">Belongs to the ribonucleoside diphosphate reductase large chain family.</text>
</comment>
<comment type="caution">
    <text evidence="1">Lacks the conserved sequence Asn-x-Cys-x-Glu essential for ribonucleotide reductase activity.</text>
</comment>
<keyword id="KW-1035">Host cytoplasm</keyword>
<keyword id="KW-0426">Late protein</keyword>
<keyword id="KW-1185">Reference proteome</keyword>
<keyword id="KW-0946">Virion</keyword>
<proteinExistence type="inferred from homology"/>
<name>RIR1_HHV7J</name>
<organismHost>
    <name type="scientific">Homo sapiens</name>
    <name type="common">Human</name>
    <dbReference type="NCBI Taxonomy" id="9606"/>
</organismHost>
<protein>
    <recommendedName>
        <fullName evidence="1">Ribonucleoside-diphosphate reductase large subunit-like protein</fullName>
    </recommendedName>
</protein>
<feature type="chain" id="PRO_0000187239" description="Ribonucleoside-diphosphate reductase large subunit-like protein">
    <location>
        <begin position="1"/>
        <end position="806"/>
    </location>
</feature>
<accession>P50641</accession>
<evidence type="ECO:0000255" key="1">
    <source>
        <dbReference type="HAMAP-Rule" id="MF_04027"/>
    </source>
</evidence>